<gene>
    <name evidence="1" type="primary">frdD</name>
    <name type="ordered locus">CGSHiEE_07900</name>
</gene>
<evidence type="ECO:0000255" key="1">
    <source>
        <dbReference type="HAMAP-Rule" id="MF_00709"/>
    </source>
</evidence>
<organism>
    <name type="scientific">Haemophilus influenzae (strain PittEE)</name>
    <dbReference type="NCBI Taxonomy" id="374930"/>
    <lineage>
        <taxon>Bacteria</taxon>
        <taxon>Pseudomonadati</taxon>
        <taxon>Pseudomonadota</taxon>
        <taxon>Gammaproteobacteria</taxon>
        <taxon>Pasteurellales</taxon>
        <taxon>Pasteurellaceae</taxon>
        <taxon>Haemophilus</taxon>
    </lineage>
</organism>
<feature type="chain" id="PRO_1000045551" description="Fumarate reductase subunit D">
    <location>
        <begin position="1"/>
        <end position="114"/>
    </location>
</feature>
<feature type="transmembrane region" description="Helical" evidence="1">
    <location>
        <begin position="24"/>
        <end position="44"/>
    </location>
</feature>
<feature type="transmembrane region" description="Helical" evidence="1">
    <location>
        <begin position="50"/>
        <end position="70"/>
    </location>
</feature>
<feature type="transmembrane region" description="Helical" evidence="1">
    <location>
        <begin position="92"/>
        <end position="112"/>
    </location>
</feature>
<reference key="1">
    <citation type="journal article" date="2007" name="Genome Biol.">
        <title>Characterization and modeling of the Haemophilus influenzae core and supragenomes based on the complete genomic sequences of Rd and 12 clinical nontypeable strains.</title>
        <authorList>
            <person name="Hogg J.S."/>
            <person name="Hu F.Z."/>
            <person name="Janto B."/>
            <person name="Boissy R."/>
            <person name="Hayes J."/>
            <person name="Keefe R."/>
            <person name="Post J.C."/>
            <person name="Ehrlich G.D."/>
        </authorList>
    </citation>
    <scope>NUCLEOTIDE SEQUENCE [LARGE SCALE GENOMIC DNA]</scope>
    <source>
        <strain>PittEE</strain>
    </source>
</reference>
<dbReference type="EMBL" id="CP000671">
    <property type="protein sequence ID" value="ABQ98893.1"/>
    <property type="molecule type" value="Genomic_DNA"/>
</dbReference>
<dbReference type="SMR" id="A5UDP2"/>
<dbReference type="KEGG" id="hip:CGSHiEE_07900"/>
<dbReference type="HOGENOM" id="CLU_168367_0_0_6"/>
<dbReference type="GO" id="GO:0045283">
    <property type="term" value="C:fumarate reductase complex"/>
    <property type="evidence" value="ECO:0007669"/>
    <property type="project" value="UniProtKB-UniRule"/>
</dbReference>
<dbReference type="GO" id="GO:0005886">
    <property type="term" value="C:plasma membrane"/>
    <property type="evidence" value="ECO:0007669"/>
    <property type="project" value="UniProtKB-SubCell"/>
</dbReference>
<dbReference type="GO" id="GO:0000104">
    <property type="term" value="F:succinate dehydrogenase activity"/>
    <property type="evidence" value="ECO:0007669"/>
    <property type="project" value="UniProtKB-UniRule"/>
</dbReference>
<dbReference type="GO" id="GO:0006106">
    <property type="term" value="P:fumarate metabolic process"/>
    <property type="evidence" value="ECO:0007669"/>
    <property type="project" value="InterPro"/>
</dbReference>
<dbReference type="CDD" id="cd00547">
    <property type="entry name" value="QFR_TypeD_subunitD"/>
    <property type="match status" value="1"/>
</dbReference>
<dbReference type="Gene3D" id="1.20.1300.10">
    <property type="entry name" value="Fumarate reductase/succinate dehydrogenase, transmembrane subunit"/>
    <property type="match status" value="1"/>
</dbReference>
<dbReference type="HAMAP" id="MF_00709">
    <property type="entry name" value="Fumarate_red_D"/>
    <property type="match status" value="1"/>
</dbReference>
<dbReference type="InterPro" id="IPR003418">
    <property type="entry name" value="Fumarate_red_D"/>
</dbReference>
<dbReference type="InterPro" id="IPR034804">
    <property type="entry name" value="SQR/QFR_C/D"/>
</dbReference>
<dbReference type="NCBIfam" id="NF003977">
    <property type="entry name" value="PRK05470.1-1"/>
    <property type="match status" value="1"/>
</dbReference>
<dbReference type="Pfam" id="PF02313">
    <property type="entry name" value="Fumarate_red_D"/>
    <property type="match status" value="1"/>
</dbReference>
<dbReference type="PIRSF" id="PIRSF000179">
    <property type="entry name" value="FrdD"/>
    <property type="match status" value="1"/>
</dbReference>
<dbReference type="SUPFAM" id="SSF81343">
    <property type="entry name" value="Fumarate reductase respiratory complex transmembrane subunits"/>
    <property type="match status" value="1"/>
</dbReference>
<name>FRDD_HAEIE</name>
<proteinExistence type="inferred from homology"/>
<sequence length="114" mass="12642">MVDQNPKRSGEPPVWLMFGAGGTVSAIFFPVVILIIGLLLPFGLVDAHNLITFAYSWIGKLVILVLTIFPMWCGLHRIHHGMHDLKVHVPAGGFIFYGLATIYTVWVLFAVINL</sequence>
<protein>
    <recommendedName>
        <fullName evidence="1">Fumarate reductase subunit D</fullName>
    </recommendedName>
    <alternativeName>
        <fullName evidence="1">Quinol-fumarate reductase subunit D</fullName>
        <shortName evidence="1">QFR subunit D</shortName>
    </alternativeName>
</protein>
<accession>A5UDP2</accession>
<comment type="function">
    <text evidence="1">Anchors the catalytic components of the fumarate reductase complex to the cell membrane, binds quinones.</text>
</comment>
<comment type="subunit">
    <text evidence="1">Part of an enzyme complex containing four subunits: a flavoprotein (FrdA), an iron-sulfur protein (FrdB), and two hydrophobic anchor proteins (FrdC and FrdD).</text>
</comment>
<comment type="subcellular location">
    <subcellularLocation>
        <location evidence="1">Cell inner membrane</location>
        <topology evidence="1">Multi-pass membrane protein</topology>
    </subcellularLocation>
</comment>
<comment type="similarity">
    <text evidence="1">Belongs to the FrdD family.</text>
</comment>
<keyword id="KW-0997">Cell inner membrane</keyword>
<keyword id="KW-1003">Cell membrane</keyword>
<keyword id="KW-0472">Membrane</keyword>
<keyword id="KW-0812">Transmembrane</keyword>
<keyword id="KW-1133">Transmembrane helix</keyword>